<name>PYRG_PARPJ</name>
<reference key="1">
    <citation type="journal article" date="2011" name="J. Bacteriol.">
        <title>Complete genome sequence of the plant growth-promoting endophyte Burkholderia phytofirmans strain PsJN.</title>
        <authorList>
            <person name="Weilharter A."/>
            <person name="Mitter B."/>
            <person name="Shin M.V."/>
            <person name="Chain P.S."/>
            <person name="Nowak J."/>
            <person name="Sessitsch A."/>
        </authorList>
    </citation>
    <scope>NUCLEOTIDE SEQUENCE [LARGE SCALE GENOMIC DNA]</scope>
    <source>
        <strain>DSM 17436 / LMG 22146 / PsJN</strain>
    </source>
</reference>
<keyword id="KW-0067">ATP-binding</keyword>
<keyword id="KW-0315">Glutamine amidotransferase</keyword>
<keyword id="KW-0436">Ligase</keyword>
<keyword id="KW-0460">Magnesium</keyword>
<keyword id="KW-0479">Metal-binding</keyword>
<keyword id="KW-0547">Nucleotide-binding</keyword>
<keyword id="KW-0665">Pyrimidine biosynthesis</keyword>
<organism>
    <name type="scientific">Paraburkholderia phytofirmans (strain DSM 17436 / LMG 22146 / PsJN)</name>
    <name type="common">Burkholderia phytofirmans</name>
    <dbReference type="NCBI Taxonomy" id="398527"/>
    <lineage>
        <taxon>Bacteria</taxon>
        <taxon>Pseudomonadati</taxon>
        <taxon>Pseudomonadota</taxon>
        <taxon>Betaproteobacteria</taxon>
        <taxon>Burkholderiales</taxon>
        <taxon>Burkholderiaceae</taxon>
        <taxon>Paraburkholderia</taxon>
    </lineage>
</organism>
<evidence type="ECO:0000255" key="1">
    <source>
        <dbReference type="HAMAP-Rule" id="MF_01227"/>
    </source>
</evidence>
<gene>
    <name evidence="1" type="primary">pyrG</name>
    <name type="ordered locus">Bphyt_2562</name>
</gene>
<proteinExistence type="inferred from homology"/>
<comment type="function">
    <text evidence="1">Catalyzes the ATP-dependent amination of UTP to CTP with either L-glutamine or ammonia as the source of nitrogen. Regulates intracellular CTP levels through interactions with the four ribonucleotide triphosphates.</text>
</comment>
<comment type="catalytic activity">
    <reaction evidence="1">
        <text>UTP + L-glutamine + ATP + H2O = CTP + L-glutamate + ADP + phosphate + 2 H(+)</text>
        <dbReference type="Rhea" id="RHEA:26426"/>
        <dbReference type="ChEBI" id="CHEBI:15377"/>
        <dbReference type="ChEBI" id="CHEBI:15378"/>
        <dbReference type="ChEBI" id="CHEBI:29985"/>
        <dbReference type="ChEBI" id="CHEBI:30616"/>
        <dbReference type="ChEBI" id="CHEBI:37563"/>
        <dbReference type="ChEBI" id="CHEBI:43474"/>
        <dbReference type="ChEBI" id="CHEBI:46398"/>
        <dbReference type="ChEBI" id="CHEBI:58359"/>
        <dbReference type="ChEBI" id="CHEBI:456216"/>
        <dbReference type="EC" id="6.3.4.2"/>
    </reaction>
</comment>
<comment type="catalytic activity">
    <reaction evidence="1">
        <text>L-glutamine + H2O = L-glutamate + NH4(+)</text>
        <dbReference type="Rhea" id="RHEA:15889"/>
        <dbReference type="ChEBI" id="CHEBI:15377"/>
        <dbReference type="ChEBI" id="CHEBI:28938"/>
        <dbReference type="ChEBI" id="CHEBI:29985"/>
        <dbReference type="ChEBI" id="CHEBI:58359"/>
    </reaction>
</comment>
<comment type="catalytic activity">
    <reaction evidence="1">
        <text>UTP + NH4(+) + ATP = CTP + ADP + phosphate + 2 H(+)</text>
        <dbReference type="Rhea" id="RHEA:16597"/>
        <dbReference type="ChEBI" id="CHEBI:15378"/>
        <dbReference type="ChEBI" id="CHEBI:28938"/>
        <dbReference type="ChEBI" id="CHEBI:30616"/>
        <dbReference type="ChEBI" id="CHEBI:37563"/>
        <dbReference type="ChEBI" id="CHEBI:43474"/>
        <dbReference type="ChEBI" id="CHEBI:46398"/>
        <dbReference type="ChEBI" id="CHEBI:456216"/>
    </reaction>
</comment>
<comment type="activity regulation">
    <text evidence="1">Allosterically activated by GTP, when glutamine is the substrate; GTP has no effect on the reaction when ammonia is the substrate. The allosteric effector GTP functions by stabilizing the protein conformation that binds the tetrahedral intermediate(s) formed during glutamine hydrolysis. Inhibited by the product CTP, via allosteric rather than competitive inhibition.</text>
</comment>
<comment type="pathway">
    <text evidence="1">Pyrimidine metabolism; CTP biosynthesis via de novo pathway; CTP from UDP: step 2/2.</text>
</comment>
<comment type="subunit">
    <text evidence="1">Homotetramer.</text>
</comment>
<comment type="miscellaneous">
    <text evidence="1">CTPSs have evolved a hybrid strategy for distinguishing between UTP and CTP. The overlapping regions of the product feedback inhibitory and substrate sites recognize a common feature in both compounds, the triphosphate moiety. To differentiate isosteric substrate and product pyrimidine rings, an additional pocket far from the expected kinase/ligase catalytic site, specifically recognizes the cytosine and ribose portions of the product inhibitor.</text>
</comment>
<comment type="similarity">
    <text evidence="1">Belongs to the CTP synthase family.</text>
</comment>
<accession>B2SXV1</accession>
<dbReference type="EC" id="6.3.4.2" evidence="1"/>
<dbReference type="EMBL" id="CP001052">
    <property type="protein sequence ID" value="ACD16957.1"/>
    <property type="molecule type" value="Genomic_DNA"/>
</dbReference>
<dbReference type="RefSeq" id="WP_012433551.1">
    <property type="nucleotide sequence ID" value="NC_010681.1"/>
</dbReference>
<dbReference type="SMR" id="B2SXV1"/>
<dbReference type="STRING" id="398527.Bphyt_2562"/>
<dbReference type="MEROPS" id="C26.964"/>
<dbReference type="KEGG" id="bpy:Bphyt_2562"/>
<dbReference type="eggNOG" id="COG0504">
    <property type="taxonomic scope" value="Bacteria"/>
</dbReference>
<dbReference type="HOGENOM" id="CLU_011675_5_0_4"/>
<dbReference type="OrthoDB" id="9801107at2"/>
<dbReference type="UniPathway" id="UPA00159">
    <property type="reaction ID" value="UER00277"/>
</dbReference>
<dbReference type="Proteomes" id="UP000001739">
    <property type="component" value="Chromosome 1"/>
</dbReference>
<dbReference type="GO" id="GO:0005829">
    <property type="term" value="C:cytosol"/>
    <property type="evidence" value="ECO:0007669"/>
    <property type="project" value="TreeGrafter"/>
</dbReference>
<dbReference type="GO" id="GO:0005524">
    <property type="term" value="F:ATP binding"/>
    <property type="evidence" value="ECO:0007669"/>
    <property type="project" value="UniProtKB-KW"/>
</dbReference>
<dbReference type="GO" id="GO:0003883">
    <property type="term" value="F:CTP synthase activity"/>
    <property type="evidence" value="ECO:0007669"/>
    <property type="project" value="UniProtKB-UniRule"/>
</dbReference>
<dbReference type="GO" id="GO:0004359">
    <property type="term" value="F:glutaminase activity"/>
    <property type="evidence" value="ECO:0007669"/>
    <property type="project" value="RHEA"/>
</dbReference>
<dbReference type="GO" id="GO:0042802">
    <property type="term" value="F:identical protein binding"/>
    <property type="evidence" value="ECO:0007669"/>
    <property type="project" value="TreeGrafter"/>
</dbReference>
<dbReference type="GO" id="GO:0046872">
    <property type="term" value="F:metal ion binding"/>
    <property type="evidence" value="ECO:0007669"/>
    <property type="project" value="UniProtKB-KW"/>
</dbReference>
<dbReference type="GO" id="GO:0044210">
    <property type="term" value="P:'de novo' CTP biosynthetic process"/>
    <property type="evidence" value="ECO:0007669"/>
    <property type="project" value="UniProtKB-UniRule"/>
</dbReference>
<dbReference type="GO" id="GO:0019856">
    <property type="term" value="P:pyrimidine nucleobase biosynthetic process"/>
    <property type="evidence" value="ECO:0007669"/>
    <property type="project" value="TreeGrafter"/>
</dbReference>
<dbReference type="CDD" id="cd03113">
    <property type="entry name" value="CTPS_N"/>
    <property type="match status" value="1"/>
</dbReference>
<dbReference type="CDD" id="cd01746">
    <property type="entry name" value="GATase1_CTP_Synthase"/>
    <property type="match status" value="1"/>
</dbReference>
<dbReference type="FunFam" id="3.40.50.300:FF:000009">
    <property type="entry name" value="CTP synthase"/>
    <property type="match status" value="1"/>
</dbReference>
<dbReference type="FunFam" id="3.40.50.880:FF:000002">
    <property type="entry name" value="CTP synthase"/>
    <property type="match status" value="1"/>
</dbReference>
<dbReference type="Gene3D" id="3.40.50.880">
    <property type="match status" value="1"/>
</dbReference>
<dbReference type="Gene3D" id="3.40.50.300">
    <property type="entry name" value="P-loop containing nucleotide triphosphate hydrolases"/>
    <property type="match status" value="1"/>
</dbReference>
<dbReference type="HAMAP" id="MF_01227">
    <property type="entry name" value="PyrG"/>
    <property type="match status" value="1"/>
</dbReference>
<dbReference type="InterPro" id="IPR029062">
    <property type="entry name" value="Class_I_gatase-like"/>
</dbReference>
<dbReference type="InterPro" id="IPR004468">
    <property type="entry name" value="CTP_synthase"/>
</dbReference>
<dbReference type="InterPro" id="IPR017456">
    <property type="entry name" value="CTP_synthase_N"/>
</dbReference>
<dbReference type="InterPro" id="IPR017926">
    <property type="entry name" value="GATASE"/>
</dbReference>
<dbReference type="InterPro" id="IPR033828">
    <property type="entry name" value="GATase1_CTP_Synthase"/>
</dbReference>
<dbReference type="InterPro" id="IPR027417">
    <property type="entry name" value="P-loop_NTPase"/>
</dbReference>
<dbReference type="NCBIfam" id="NF003792">
    <property type="entry name" value="PRK05380.1"/>
    <property type="match status" value="1"/>
</dbReference>
<dbReference type="NCBIfam" id="TIGR00337">
    <property type="entry name" value="PyrG"/>
    <property type="match status" value="1"/>
</dbReference>
<dbReference type="PANTHER" id="PTHR11550">
    <property type="entry name" value="CTP SYNTHASE"/>
    <property type="match status" value="1"/>
</dbReference>
<dbReference type="PANTHER" id="PTHR11550:SF0">
    <property type="entry name" value="CTP SYNTHASE-RELATED"/>
    <property type="match status" value="1"/>
</dbReference>
<dbReference type="Pfam" id="PF06418">
    <property type="entry name" value="CTP_synth_N"/>
    <property type="match status" value="1"/>
</dbReference>
<dbReference type="Pfam" id="PF00117">
    <property type="entry name" value="GATase"/>
    <property type="match status" value="1"/>
</dbReference>
<dbReference type="SUPFAM" id="SSF52317">
    <property type="entry name" value="Class I glutamine amidotransferase-like"/>
    <property type="match status" value="1"/>
</dbReference>
<dbReference type="SUPFAM" id="SSF52540">
    <property type="entry name" value="P-loop containing nucleoside triphosphate hydrolases"/>
    <property type="match status" value="1"/>
</dbReference>
<dbReference type="PROSITE" id="PS51273">
    <property type="entry name" value="GATASE_TYPE_1"/>
    <property type="match status" value="1"/>
</dbReference>
<sequence>MTKYVFVTGGVVSSLGKGIAAASLAAILESRGLKVTLLKLDPYINVDPGTMSPFQHGEVFVTEDGAETDLDLGHYERFISTKMRKANNFTTGQIYESVIRKERRGDYLGKTVQVIPHITNEIQAFIERGAASATCGEPDVAIVEVGGTVGDIESLPFLEAARQMSLRMGRNSACFVHLTLVPWVATAGELKTKPTQHSVQKLREIGISPHVLLCRADRRIPDDERAKISMFSNVPEDAVISVWDADSIYKIPQMLHDQGLDAIICEELKLTPHAADLSMWSDLVEKLEHPKHEVTIGMVGKYVDLTESYKSLIEALRHASMHTSTKVNIEYIDSEEVETQGVESLKHLDAVLVPGGFGRRGTEGKIAAIRYAREAKVPYLGICLGMQLAVIEFARDVVGLKDANSTEFDQETPNRVVALITEWYDREGRVEKRTEESDLGGTMRLGSQRCPIKPGTMAEEIYGKDVNERHRHRYEVNNRFVPQLEAGGLIISARTPSEDLPEMMELPRSMHPWFVGVQFHPEFTSTPRDGHPLFKSFVEAALAHHEAQAPVAVGEKA</sequence>
<feature type="chain" id="PRO_1000139406" description="CTP synthase">
    <location>
        <begin position="1"/>
        <end position="557"/>
    </location>
</feature>
<feature type="domain" description="Glutamine amidotransferase type-1" evidence="1">
    <location>
        <begin position="295"/>
        <end position="547"/>
    </location>
</feature>
<feature type="region of interest" description="Amidoligase domain" evidence="1">
    <location>
        <begin position="1"/>
        <end position="270"/>
    </location>
</feature>
<feature type="active site" description="Nucleophile; for glutamine hydrolysis" evidence="1">
    <location>
        <position position="383"/>
    </location>
</feature>
<feature type="active site" evidence="1">
    <location>
        <position position="520"/>
    </location>
</feature>
<feature type="active site" evidence="1">
    <location>
        <position position="522"/>
    </location>
</feature>
<feature type="binding site" evidence="1">
    <location>
        <position position="13"/>
    </location>
    <ligand>
        <name>CTP</name>
        <dbReference type="ChEBI" id="CHEBI:37563"/>
        <note>allosteric inhibitor</note>
    </ligand>
</feature>
<feature type="binding site" evidence="1">
    <location>
        <position position="13"/>
    </location>
    <ligand>
        <name>UTP</name>
        <dbReference type="ChEBI" id="CHEBI:46398"/>
    </ligand>
</feature>
<feature type="binding site" evidence="1">
    <location>
        <begin position="14"/>
        <end position="19"/>
    </location>
    <ligand>
        <name>ATP</name>
        <dbReference type="ChEBI" id="CHEBI:30616"/>
    </ligand>
</feature>
<feature type="binding site" evidence="1">
    <location>
        <position position="71"/>
    </location>
    <ligand>
        <name>ATP</name>
        <dbReference type="ChEBI" id="CHEBI:30616"/>
    </ligand>
</feature>
<feature type="binding site" evidence="1">
    <location>
        <position position="71"/>
    </location>
    <ligand>
        <name>Mg(2+)</name>
        <dbReference type="ChEBI" id="CHEBI:18420"/>
    </ligand>
</feature>
<feature type="binding site" evidence="1">
    <location>
        <position position="144"/>
    </location>
    <ligand>
        <name>Mg(2+)</name>
        <dbReference type="ChEBI" id="CHEBI:18420"/>
    </ligand>
</feature>
<feature type="binding site" evidence="1">
    <location>
        <begin position="151"/>
        <end position="153"/>
    </location>
    <ligand>
        <name>CTP</name>
        <dbReference type="ChEBI" id="CHEBI:37563"/>
        <note>allosteric inhibitor</note>
    </ligand>
</feature>
<feature type="binding site" evidence="1">
    <location>
        <begin position="191"/>
        <end position="196"/>
    </location>
    <ligand>
        <name>CTP</name>
        <dbReference type="ChEBI" id="CHEBI:37563"/>
        <note>allosteric inhibitor</note>
    </ligand>
</feature>
<feature type="binding site" evidence="1">
    <location>
        <begin position="191"/>
        <end position="196"/>
    </location>
    <ligand>
        <name>UTP</name>
        <dbReference type="ChEBI" id="CHEBI:46398"/>
    </ligand>
</feature>
<feature type="binding site" evidence="1">
    <location>
        <position position="227"/>
    </location>
    <ligand>
        <name>CTP</name>
        <dbReference type="ChEBI" id="CHEBI:37563"/>
        <note>allosteric inhibitor</note>
    </ligand>
</feature>
<feature type="binding site" evidence="1">
    <location>
        <position position="227"/>
    </location>
    <ligand>
        <name>UTP</name>
        <dbReference type="ChEBI" id="CHEBI:46398"/>
    </ligand>
</feature>
<feature type="binding site" evidence="1">
    <location>
        <position position="356"/>
    </location>
    <ligand>
        <name>L-glutamine</name>
        <dbReference type="ChEBI" id="CHEBI:58359"/>
    </ligand>
</feature>
<feature type="binding site" evidence="1">
    <location>
        <begin position="384"/>
        <end position="387"/>
    </location>
    <ligand>
        <name>L-glutamine</name>
        <dbReference type="ChEBI" id="CHEBI:58359"/>
    </ligand>
</feature>
<feature type="binding site" evidence="1">
    <location>
        <position position="407"/>
    </location>
    <ligand>
        <name>L-glutamine</name>
        <dbReference type="ChEBI" id="CHEBI:58359"/>
    </ligand>
</feature>
<feature type="binding site" evidence="1">
    <location>
        <position position="473"/>
    </location>
    <ligand>
        <name>L-glutamine</name>
        <dbReference type="ChEBI" id="CHEBI:58359"/>
    </ligand>
</feature>
<protein>
    <recommendedName>
        <fullName evidence="1">CTP synthase</fullName>
        <ecNumber evidence="1">6.3.4.2</ecNumber>
    </recommendedName>
    <alternativeName>
        <fullName evidence="1">Cytidine 5'-triphosphate synthase</fullName>
    </alternativeName>
    <alternativeName>
        <fullName evidence="1">Cytidine triphosphate synthetase</fullName>
        <shortName evidence="1">CTP synthetase</shortName>
        <shortName evidence="1">CTPS</shortName>
    </alternativeName>
    <alternativeName>
        <fullName evidence="1">UTP--ammonia ligase</fullName>
    </alternativeName>
</protein>